<feature type="chain" id="PRO_0000311457" description="Putative iron-sulfur cluster insertion protein ErpA">
    <location>
        <begin position="1"/>
        <end position="122"/>
    </location>
</feature>
<feature type="binding site" evidence="1">
    <location>
        <position position="50"/>
    </location>
    <ligand>
        <name>iron-sulfur cluster</name>
        <dbReference type="ChEBI" id="CHEBI:30408"/>
    </ligand>
</feature>
<feature type="binding site" evidence="1">
    <location>
        <position position="114"/>
    </location>
    <ligand>
        <name>iron-sulfur cluster</name>
        <dbReference type="ChEBI" id="CHEBI:30408"/>
    </ligand>
</feature>
<feature type="binding site" evidence="1">
    <location>
        <position position="116"/>
    </location>
    <ligand>
        <name>iron-sulfur cluster</name>
        <dbReference type="ChEBI" id="CHEBI:30408"/>
    </ligand>
</feature>
<comment type="function">
    <text evidence="1">Required for insertion of 4Fe-4S clusters.</text>
</comment>
<comment type="cofactor">
    <cofactor evidence="1">
        <name>iron-sulfur cluster</name>
        <dbReference type="ChEBI" id="CHEBI:30408"/>
    </cofactor>
    <text evidence="1">Binds 1 iron-sulfur cluster per subunit.</text>
</comment>
<comment type="subunit">
    <text evidence="1">Homodimer.</text>
</comment>
<comment type="similarity">
    <text evidence="1">Belongs to the HesB/IscA family.</text>
</comment>
<proteinExistence type="inferred from homology"/>
<dbReference type="EMBL" id="CP000010">
    <property type="protein sequence ID" value="AAU50225.1"/>
    <property type="molecule type" value="Genomic_DNA"/>
</dbReference>
<dbReference type="RefSeq" id="WP_004194247.1">
    <property type="nucleotide sequence ID" value="NC_006348.1"/>
</dbReference>
<dbReference type="RefSeq" id="YP_103902.1">
    <property type="nucleotide sequence ID" value="NC_006348.1"/>
</dbReference>
<dbReference type="SMR" id="Q62HB8"/>
<dbReference type="GeneID" id="93061505"/>
<dbReference type="KEGG" id="bma:BMA2343"/>
<dbReference type="PATRIC" id="fig|243160.12.peg.2413"/>
<dbReference type="eggNOG" id="COG0316">
    <property type="taxonomic scope" value="Bacteria"/>
</dbReference>
<dbReference type="HOGENOM" id="CLU_069054_5_3_4"/>
<dbReference type="Proteomes" id="UP000006693">
    <property type="component" value="Chromosome 1"/>
</dbReference>
<dbReference type="GO" id="GO:0051537">
    <property type="term" value="F:2 iron, 2 sulfur cluster binding"/>
    <property type="evidence" value="ECO:0007669"/>
    <property type="project" value="TreeGrafter"/>
</dbReference>
<dbReference type="GO" id="GO:0051539">
    <property type="term" value="F:4 iron, 4 sulfur cluster binding"/>
    <property type="evidence" value="ECO:0007669"/>
    <property type="project" value="TreeGrafter"/>
</dbReference>
<dbReference type="GO" id="GO:0005506">
    <property type="term" value="F:iron ion binding"/>
    <property type="evidence" value="ECO:0007669"/>
    <property type="project" value="UniProtKB-UniRule"/>
</dbReference>
<dbReference type="GO" id="GO:0016226">
    <property type="term" value="P:iron-sulfur cluster assembly"/>
    <property type="evidence" value="ECO:0007669"/>
    <property type="project" value="UniProtKB-UniRule"/>
</dbReference>
<dbReference type="FunFam" id="2.60.300.12:FF:000002">
    <property type="entry name" value="Iron-sulfur cluster insertion protein ErpA"/>
    <property type="match status" value="1"/>
</dbReference>
<dbReference type="Gene3D" id="2.60.300.12">
    <property type="entry name" value="HesB-like domain"/>
    <property type="match status" value="1"/>
</dbReference>
<dbReference type="HAMAP" id="MF_01380">
    <property type="entry name" value="Fe_S_insert_ErpA"/>
    <property type="match status" value="1"/>
</dbReference>
<dbReference type="InterPro" id="IPR000361">
    <property type="entry name" value="FeS_biogenesis"/>
</dbReference>
<dbReference type="InterPro" id="IPR016092">
    <property type="entry name" value="FeS_cluster_insertion"/>
</dbReference>
<dbReference type="InterPro" id="IPR017870">
    <property type="entry name" value="FeS_cluster_insertion_CS"/>
</dbReference>
<dbReference type="InterPro" id="IPR023063">
    <property type="entry name" value="FeS_cluster_insertion_RrpA"/>
</dbReference>
<dbReference type="InterPro" id="IPR035903">
    <property type="entry name" value="HesB-like_dom_sf"/>
</dbReference>
<dbReference type="NCBIfam" id="TIGR00049">
    <property type="entry name" value="iron-sulfur cluster assembly accessory protein"/>
    <property type="match status" value="1"/>
</dbReference>
<dbReference type="NCBIfam" id="NF010147">
    <property type="entry name" value="PRK13623.1"/>
    <property type="match status" value="1"/>
</dbReference>
<dbReference type="PANTHER" id="PTHR43011">
    <property type="entry name" value="IRON-SULFUR CLUSTER ASSEMBLY 2 HOMOLOG, MITOCHONDRIAL"/>
    <property type="match status" value="1"/>
</dbReference>
<dbReference type="PANTHER" id="PTHR43011:SF1">
    <property type="entry name" value="IRON-SULFUR CLUSTER ASSEMBLY 2 HOMOLOG, MITOCHONDRIAL"/>
    <property type="match status" value="1"/>
</dbReference>
<dbReference type="Pfam" id="PF01521">
    <property type="entry name" value="Fe-S_biosyn"/>
    <property type="match status" value="1"/>
</dbReference>
<dbReference type="SUPFAM" id="SSF89360">
    <property type="entry name" value="HesB-like domain"/>
    <property type="match status" value="1"/>
</dbReference>
<dbReference type="PROSITE" id="PS01152">
    <property type="entry name" value="HESB"/>
    <property type="match status" value="1"/>
</dbReference>
<sequence length="122" mass="13093">MNAVTESAATTEMPAPFVFTDAAADKVKQLIDEEGNPDLKLRVFVQGGGCSGFQYGFTFDEEVNEDDTVLNKNGVVLLVDAMSYQYLVGAEIDYKDDLNGAQFVIKNPNATTTCGCGSSFSV</sequence>
<reference key="1">
    <citation type="journal article" date="2004" name="Proc. Natl. Acad. Sci. U.S.A.">
        <title>Structural flexibility in the Burkholderia mallei genome.</title>
        <authorList>
            <person name="Nierman W.C."/>
            <person name="DeShazer D."/>
            <person name="Kim H.S."/>
            <person name="Tettelin H."/>
            <person name="Nelson K.E."/>
            <person name="Feldblyum T.V."/>
            <person name="Ulrich R.L."/>
            <person name="Ronning C.M."/>
            <person name="Brinkac L.M."/>
            <person name="Daugherty S.C."/>
            <person name="Davidsen T.D."/>
            <person name="DeBoy R.T."/>
            <person name="Dimitrov G."/>
            <person name="Dodson R.J."/>
            <person name="Durkin A.S."/>
            <person name="Gwinn M.L."/>
            <person name="Haft D.H."/>
            <person name="Khouri H.M."/>
            <person name="Kolonay J.F."/>
            <person name="Madupu R."/>
            <person name="Mohammoud Y."/>
            <person name="Nelson W.C."/>
            <person name="Radune D."/>
            <person name="Romero C.M."/>
            <person name="Sarria S."/>
            <person name="Selengut J."/>
            <person name="Shamblin C."/>
            <person name="Sullivan S.A."/>
            <person name="White O."/>
            <person name="Yu Y."/>
            <person name="Zafar N."/>
            <person name="Zhou L."/>
            <person name="Fraser C.M."/>
        </authorList>
    </citation>
    <scope>NUCLEOTIDE SEQUENCE [LARGE SCALE GENOMIC DNA]</scope>
    <source>
        <strain>ATCC 23344</strain>
    </source>
</reference>
<protein>
    <recommendedName>
        <fullName evidence="1">Putative iron-sulfur cluster insertion protein ErpA</fullName>
    </recommendedName>
</protein>
<evidence type="ECO:0000255" key="1">
    <source>
        <dbReference type="HAMAP-Rule" id="MF_01380"/>
    </source>
</evidence>
<keyword id="KW-0408">Iron</keyword>
<keyword id="KW-0411">Iron-sulfur</keyword>
<keyword id="KW-0479">Metal-binding</keyword>
<keyword id="KW-1185">Reference proteome</keyword>
<gene>
    <name evidence="1" type="primary">erpA</name>
    <name type="ordered locus">BMA2343</name>
</gene>
<name>ERPA_BURMA</name>
<organism>
    <name type="scientific">Burkholderia mallei (strain ATCC 23344)</name>
    <dbReference type="NCBI Taxonomy" id="243160"/>
    <lineage>
        <taxon>Bacteria</taxon>
        <taxon>Pseudomonadati</taxon>
        <taxon>Pseudomonadota</taxon>
        <taxon>Betaproteobacteria</taxon>
        <taxon>Burkholderiales</taxon>
        <taxon>Burkholderiaceae</taxon>
        <taxon>Burkholderia</taxon>
        <taxon>pseudomallei group</taxon>
    </lineage>
</organism>
<accession>Q62HB8</accession>